<feature type="chain" id="PRO_0000324620" description="Neurochondrin">
    <location>
        <begin position="1"/>
        <end position="702"/>
    </location>
</feature>
<keyword id="KW-0966">Cell projection</keyword>
<keyword id="KW-0963">Cytoplasm</keyword>
<keyword id="KW-1185">Reference proteome</keyword>
<keyword id="KW-0770">Synapse</keyword>
<organism>
    <name type="scientific">Gallus gallus</name>
    <name type="common">Chicken</name>
    <dbReference type="NCBI Taxonomy" id="9031"/>
    <lineage>
        <taxon>Eukaryota</taxon>
        <taxon>Metazoa</taxon>
        <taxon>Chordata</taxon>
        <taxon>Craniata</taxon>
        <taxon>Vertebrata</taxon>
        <taxon>Euteleostomi</taxon>
        <taxon>Archelosauria</taxon>
        <taxon>Archosauria</taxon>
        <taxon>Dinosauria</taxon>
        <taxon>Saurischia</taxon>
        <taxon>Theropoda</taxon>
        <taxon>Coelurosauria</taxon>
        <taxon>Aves</taxon>
        <taxon>Neognathae</taxon>
        <taxon>Galloanserae</taxon>
        <taxon>Galliformes</taxon>
        <taxon>Phasianidae</taxon>
        <taxon>Phasianinae</taxon>
        <taxon>Gallus</taxon>
    </lineage>
</organism>
<proteinExistence type="evidence at transcript level"/>
<name>NCDN_CHICK</name>
<accession>Q5ZIG0</accession>
<sequence>MASGPGAATLKKCLEVLRDARNDSEQLAALLLVTKAVRAGDLDSKTRRQIFDAIGFTFPNRLLSSRQAPPGCPEHTFRALGLTLLACFCTEPELAGHSQVLNKIPTFADVLLSPCQPDCTSMVDDAYQCLAAVLATPRGPREMVTKGAASALCQAYVNGGYGSERALALLLGLLAVSEAKCWQRDAPHLLAVLSKLSEEFVRAEDGSQFELCELLPRFIPLSPPLAEVSQGSECVRQLYKGLASILGSKLSQSQRDPALKLAASLTQACGSEWIPAGSTGSKFLALLVNLACVEVRLTLEEPEPLEVEGKKEVVTACYVLIEMGIQECLKEEESLLDEAQRMQLMRIMEEAFGAVVFYLRQVKEEELQDPFVFASVRILGAWMAEETSSLKQEICELLPFLVRYARKLFKEGGPAENLPQTAGLVSSDSSILGQDALRFLLPGFCHLTAEDRPRDILISEGAPALLCDYFLHQWGVLTSQPGSLTSTEMSLQTLCGIFLNLVVTAPNLIRQEKTFSSLMDTLLKSLPFLLPQKDHLVLAANIATLGLVMARILSSSAVLQKTGSAKEFFRATICFLSQAHTAQADPGSHGLALAVSPAYVSAWDDIRELWFLGMQALASCVPLFPWLPQAVLQAQWLEELSELLTRVTAASVDFELIAAFQGVLVGLARASKPCREVILSHHGEEWANLYGMAALEQCLSKQ</sequence>
<comment type="function">
    <text evidence="1">Probably involved in signal transduction, in the nervous system. Required for the spatial learning process. May also be involved in neurite outgrowth (By similarity).</text>
</comment>
<comment type="subcellular location">
    <subcellularLocation>
        <location evidence="2">Cytoplasm</location>
        <location evidence="2">Cytosol</location>
    </subcellularLocation>
    <subcellularLocation>
        <location evidence="2">Cell projection</location>
        <location evidence="2">Dendrite</location>
    </subcellularLocation>
    <subcellularLocation>
        <location evidence="2">Postsynapse</location>
    </subcellularLocation>
</comment>
<comment type="similarity">
    <text evidence="3">Belongs to the neurochondrin family.</text>
</comment>
<protein>
    <recommendedName>
        <fullName>Neurochondrin</fullName>
    </recommendedName>
</protein>
<reference key="1">
    <citation type="journal article" date="2005" name="Genome Biol.">
        <title>Full-length cDNAs from chicken bursal lymphocytes to facilitate gene function analysis.</title>
        <authorList>
            <person name="Caldwell R.B."/>
            <person name="Kierzek A.M."/>
            <person name="Arakawa H."/>
            <person name="Bezzubov Y."/>
            <person name="Zaim J."/>
            <person name="Fiedler P."/>
            <person name="Kutter S."/>
            <person name="Blagodatski A."/>
            <person name="Kostovska D."/>
            <person name="Koter M."/>
            <person name="Plachy J."/>
            <person name="Carninci P."/>
            <person name="Hayashizaki Y."/>
            <person name="Buerstedde J.-M."/>
        </authorList>
    </citation>
    <scope>NUCLEOTIDE SEQUENCE [LARGE SCALE MRNA]</scope>
    <source>
        <strain>CB</strain>
        <tissue>Bursa of Fabricius</tissue>
    </source>
</reference>
<dbReference type="EMBL" id="AJ720824">
    <property type="protein sequence ID" value="CAG32483.1"/>
    <property type="molecule type" value="mRNA"/>
</dbReference>
<dbReference type="RefSeq" id="NP_001026072.1">
    <property type="nucleotide sequence ID" value="NM_001030901.1"/>
</dbReference>
<dbReference type="SMR" id="Q5ZIG0"/>
<dbReference type="FunCoup" id="Q5ZIG0">
    <property type="interactions" value="651"/>
</dbReference>
<dbReference type="STRING" id="9031.ENSGALP00000003784"/>
<dbReference type="PaxDb" id="9031-ENSGALP00000003784"/>
<dbReference type="GeneID" id="419633"/>
<dbReference type="KEGG" id="gga:419633"/>
<dbReference type="CTD" id="23154"/>
<dbReference type="VEuPathDB" id="HostDB:geneid_419633"/>
<dbReference type="eggNOG" id="KOG2611">
    <property type="taxonomic scope" value="Eukaryota"/>
</dbReference>
<dbReference type="InParanoid" id="Q5ZIG0"/>
<dbReference type="OrthoDB" id="8186546at2759"/>
<dbReference type="PhylomeDB" id="Q5ZIG0"/>
<dbReference type="PRO" id="PR:Q5ZIG0"/>
<dbReference type="Proteomes" id="UP000000539">
    <property type="component" value="Unassembled WGS sequence"/>
</dbReference>
<dbReference type="GO" id="GO:0005829">
    <property type="term" value="C:cytosol"/>
    <property type="evidence" value="ECO:0000250"/>
    <property type="project" value="UniProtKB"/>
</dbReference>
<dbReference type="GO" id="GO:0030425">
    <property type="term" value="C:dendrite"/>
    <property type="evidence" value="ECO:0000250"/>
    <property type="project" value="UniProtKB"/>
</dbReference>
<dbReference type="GO" id="GO:0043025">
    <property type="term" value="C:neuronal cell body"/>
    <property type="evidence" value="ECO:0000250"/>
    <property type="project" value="UniProtKB"/>
</dbReference>
<dbReference type="GO" id="GO:0098794">
    <property type="term" value="C:postsynapse"/>
    <property type="evidence" value="ECO:0007669"/>
    <property type="project" value="UniProtKB-SubCell"/>
</dbReference>
<dbReference type="GO" id="GO:0031175">
    <property type="term" value="P:neuron projection development"/>
    <property type="evidence" value="ECO:0000250"/>
    <property type="project" value="UniProtKB"/>
</dbReference>
<dbReference type="GO" id="GO:0048168">
    <property type="term" value="P:regulation of neuronal synaptic plasticity"/>
    <property type="evidence" value="ECO:0000318"/>
    <property type="project" value="GO_Central"/>
</dbReference>
<dbReference type="InterPro" id="IPR008709">
    <property type="entry name" value="Neurochondrin"/>
</dbReference>
<dbReference type="PANTHER" id="PTHR13109">
    <property type="entry name" value="NEUROCHONDRIN"/>
    <property type="match status" value="1"/>
</dbReference>
<dbReference type="PANTHER" id="PTHR13109:SF7">
    <property type="entry name" value="NEUROCHONDRIN"/>
    <property type="match status" value="1"/>
</dbReference>
<dbReference type="Pfam" id="PF05536">
    <property type="entry name" value="Neurochondrin"/>
    <property type="match status" value="1"/>
</dbReference>
<evidence type="ECO:0000250" key="1"/>
<evidence type="ECO:0000250" key="2">
    <source>
        <dbReference type="UniProtKB" id="O35095"/>
    </source>
</evidence>
<evidence type="ECO:0000305" key="3"/>
<gene>
    <name type="primary">NCDN</name>
    <name type="ORF">RCJMB04_26k21</name>
</gene>